<evidence type="ECO:0000255" key="1">
    <source>
        <dbReference type="PROSITE-ProRule" id="PRU00159"/>
    </source>
</evidence>
<evidence type="ECO:0000255" key="2">
    <source>
        <dbReference type="PROSITE-ProRule" id="PRU10027"/>
    </source>
</evidence>
<evidence type="ECO:0000256" key="3">
    <source>
        <dbReference type="SAM" id="MobiDB-lite"/>
    </source>
</evidence>
<evidence type="ECO:0000269" key="4">
    <source>
    </source>
</evidence>
<evidence type="ECO:0000269" key="5">
    <source>
    </source>
</evidence>
<evidence type="ECO:0000269" key="6">
    <source>
    </source>
</evidence>
<evidence type="ECO:0000305" key="7"/>
<keyword id="KW-0067">ATP-binding</keyword>
<keyword id="KW-0418">Kinase</keyword>
<keyword id="KW-0547">Nucleotide-binding</keyword>
<keyword id="KW-0539">Nucleus</keyword>
<keyword id="KW-0597">Phosphoprotein</keyword>
<keyword id="KW-1185">Reference proteome</keyword>
<keyword id="KW-0723">Serine/threonine-protein kinase</keyword>
<keyword id="KW-0804">Transcription</keyword>
<keyword id="KW-0805">Transcription regulation</keyword>
<keyword id="KW-0808">Transferase</keyword>
<feature type="chain" id="PRO_0000085808" description="Probable cyclin-dependent kinase 9">
    <location>
        <begin position="1"/>
        <end position="591"/>
    </location>
</feature>
<feature type="domain" description="Protein kinase" evidence="1">
    <location>
        <begin position="36"/>
        <end position="339"/>
    </location>
</feature>
<feature type="region of interest" description="Interaction with pch1">
    <location>
        <begin position="1"/>
        <end position="385"/>
    </location>
</feature>
<feature type="region of interest" description="Disordered" evidence="3">
    <location>
        <begin position="341"/>
        <end position="534"/>
    </location>
</feature>
<feature type="region of interest" description="Binds to pct1">
    <location>
        <begin position="442"/>
        <end position="523"/>
    </location>
</feature>
<feature type="region of interest" description="Disordered" evidence="3">
    <location>
        <begin position="549"/>
        <end position="591"/>
    </location>
</feature>
<feature type="compositionally biased region" description="Basic and acidic residues" evidence="3">
    <location>
        <begin position="358"/>
        <end position="372"/>
    </location>
</feature>
<feature type="compositionally biased region" description="Polar residues" evidence="3">
    <location>
        <begin position="404"/>
        <end position="415"/>
    </location>
</feature>
<feature type="compositionally biased region" description="Polar residues" evidence="3">
    <location>
        <begin position="428"/>
        <end position="465"/>
    </location>
</feature>
<feature type="compositionally biased region" description="Basic and acidic residues" evidence="3">
    <location>
        <begin position="466"/>
        <end position="482"/>
    </location>
</feature>
<feature type="compositionally biased region" description="Low complexity" evidence="3">
    <location>
        <begin position="491"/>
        <end position="502"/>
    </location>
</feature>
<feature type="compositionally biased region" description="Polar residues" evidence="3">
    <location>
        <begin position="503"/>
        <end position="534"/>
    </location>
</feature>
<feature type="active site" description="Proton acceptor" evidence="1 2">
    <location>
        <position position="166"/>
    </location>
</feature>
<feature type="binding site" evidence="1">
    <location>
        <begin position="42"/>
        <end position="50"/>
    </location>
    <ligand>
        <name>ATP</name>
        <dbReference type="ChEBI" id="CHEBI:30616"/>
    </ligand>
</feature>
<feature type="binding site" evidence="1">
    <location>
        <position position="65"/>
    </location>
    <ligand>
        <name>ATP</name>
        <dbReference type="ChEBI" id="CHEBI:30616"/>
    </ligand>
</feature>
<feature type="modified residue" description="Phosphotyrosine" evidence="6">
    <location>
        <position position="211"/>
    </location>
</feature>
<feature type="modified residue" description="Phosphothreonine" evidence="6">
    <location>
        <position position="212"/>
    </location>
</feature>
<feature type="modified residue" description="Phosphothreonine" evidence="6">
    <location>
        <position position="565"/>
    </location>
</feature>
<feature type="modified residue" description="Phosphoserine" evidence="6">
    <location>
        <position position="577"/>
    </location>
</feature>
<feature type="mutagenesis site" description="Abolishes activity." evidence="4">
    <original>K</original>
    <variation>A</variation>
    <location>
        <position position="65"/>
    </location>
</feature>
<feature type="mutagenesis site" description="Defective kinase activity." evidence="4">
    <original>E</original>
    <variation>A</variation>
    <location>
        <position position="83"/>
    </location>
</feature>
<feature type="mutagenesis site" description="Abolishes activity." evidence="4">
    <original>D</original>
    <variation>N</variation>
    <location>
        <position position="184"/>
    </location>
</feature>
<feature type="mutagenesis site" description="Abolishes activity." evidence="4">
    <original>T</original>
    <variation>A</variation>
    <location>
        <position position="212"/>
    </location>
</feature>
<accession>Q96WV9</accession>
<accession>O13607</accession>
<gene>
    <name type="primary">cdk9</name>
    <name type="ORF">pi014</name>
    <name type="ORF">SPBC32H8.10</name>
</gene>
<name>CDK9_SCHPO</name>
<organism>
    <name type="scientific">Schizosaccharomyces pombe (strain 972 / ATCC 24843)</name>
    <name type="common">Fission yeast</name>
    <dbReference type="NCBI Taxonomy" id="284812"/>
    <lineage>
        <taxon>Eukaryota</taxon>
        <taxon>Fungi</taxon>
        <taxon>Dikarya</taxon>
        <taxon>Ascomycota</taxon>
        <taxon>Taphrinomycotina</taxon>
        <taxon>Schizosaccharomycetes</taxon>
        <taxon>Schizosaccharomycetales</taxon>
        <taxon>Schizosaccharomycetaceae</taxon>
        <taxon>Schizosaccharomyces</taxon>
    </lineage>
</organism>
<protein>
    <recommendedName>
        <fullName>Probable cyclin-dependent kinase 9</fullName>
        <ecNumber>2.7.11.22</ecNumber>
        <ecNumber>2.7.11.23</ecNumber>
    </recommendedName>
    <alternativeName>
        <fullName>Cell division protein kinase 9</fullName>
    </alternativeName>
</protein>
<reference key="1">
    <citation type="journal article" date="2000" name="Yeast">
        <title>A 38 kb segment containing the cdc2 gene from the left arm of fission yeast chromosome II: sequence analysis and characterization of the genomic DNA and cDNAs encoded on the segment.</title>
        <authorList>
            <person name="Machida M."/>
            <person name="Yamazaki S."/>
            <person name="Kunihiro S."/>
            <person name="Tanaka T."/>
            <person name="Kushida N."/>
            <person name="Jinno K."/>
            <person name="Haikawa Y."/>
            <person name="Yamazaki J."/>
            <person name="Yamamoto S."/>
            <person name="Sekine M."/>
            <person name="Oguchi A."/>
            <person name="Nagai Y."/>
            <person name="Sakai M."/>
            <person name="Aoki K."/>
            <person name="Ogura K."/>
            <person name="Kudoh Y."/>
            <person name="Kikuchi H."/>
            <person name="Zhang M.Q."/>
            <person name="Yanagida M."/>
        </authorList>
    </citation>
    <scope>NUCLEOTIDE SEQUENCE [LARGE SCALE GENOMIC DNA]</scope>
    <source>
        <strain>972 / ATCC 24843</strain>
    </source>
</reference>
<reference key="2">
    <citation type="journal article" date="2002" name="Nature">
        <title>The genome sequence of Schizosaccharomyces pombe.</title>
        <authorList>
            <person name="Wood V."/>
            <person name="Gwilliam R."/>
            <person name="Rajandream M.A."/>
            <person name="Lyne M.H."/>
            <person name="Lyne R."/>
            <person name="Stewart A."/>
            <person name="Sgouros J.G."/>
            <person name="Peat N."/>
            <person name="Hayles J."/>
            <person name="Baker S.G."/>
            <person name="Basham D."/>
            <person name="Bowman S."/>
            <person name="Brooks K."/>
            <person name="Brown D."/>
            <person name="Brown S."/>
            <person name="Chillingworth T."/>
            <person name="Churcher C.M."/>
            <person name="Collins M."/>
            <person name="Connor R."/>
            <person name="Cronin A."/>
            <person name="Davis P."/>
            <person name="Feltwell T."/>
            <person name="Fraser A."/>
            <person name="Gentles S."/>
            <person name="Goble A."/>
            <person name="Hamlin N."/>
            <person name="Harris D.E."/>
            <person name="Hidalgo J."/>
            <person name="Hodgson G."/>
            <person name="Holroyd S."/>
            <person name="Hornsby T."/>
            <person name="Howarth S."/>
            <person name="Huckle E.J."/>
            <person name="Hunt S."/>
            <person name="Jagels K."/>
            <person name="James K.D."/>
            <person name="Jones L."/>
            <person name="Jones M."/>
            <person name="Leather S."/>
            <person name="McDonald S."/>
            <person name="McLean J."/>
            <person name="Mooney P."/>
            <person name="Moule S."/>
            <person name="Mungall K.L."/>
            <person name="Murphy L.D."/>
            <person name="Niblett D."/>
            <person name="Odell C."/>
            <person name="Oliver K."/>
            <person name="O'Neil S."/>
            <person name="Pearson D."/>
            <person name="Quail M.A."/>
            <person name="Rabbinowitsch E."/>
            <person name="Rutherford K.M."/>
            <person name="Rutter S."/>
            <person name="Saunders D."/>
            <person name="Seeger K."/>
            <person name="Sharp S."/>
            <person name="Skelton J."/>
            <person name="Simmonds M.N."/>
            <person name="Squares R."/>
            <person name="Squares S."/>
            <person name="Stevens K."/>
            <person name="Taylor K."/>
            <person name="Taylor R.G."/>
            <person name="Tivey A."/>
            <person name="Walsh S.V."/>
            <person name="Warren T."/>
            <person name="Whitehead S."/>
            <person name="Woodward J.R."/>
            <person name="Volckaert G."/>
            <person name="Aert R."/>
            <person name="Robben J."/>
            <person name="Grymonprez B."/>
            <person name="Weltjens I."/>
            <person name="Vanstreels E."/>
            <person name="Rieger M."/>
            <person name="Schaefer M."/>
            <person name="Mueller-Auer S."/>
            <person name="Gabel C."/>
            <person name="Fuchs M."/>
            <person name="Duesterhoeft A."/>
            <person name="Fritzc C."/>
            <person name="Holzer E."/>
            <person name="Moestl D."/>
            <person name="Hilbert H."/>
            <person name="Borzym K."/>
            <person name="Langer I."/>
            <person name="Beck A."/>
            <person name="Lehrach H."/>
            <person name="Reinhardt R."/>
            <person name="Pohl T.M."/>
            <person name="Eger P."/>
            <person name="Zimmermann W."/>
            <person name="Wedler H."/>
            <person name="Wambutt R."/>
            <person name="Purnelle B."/>
            <person name="Goffeau A."/>
            <person name="Cadieu E."/>
            <person name="Dreano S."/>
            <person name="Gloux S."/>
            <person name="Lelaure V."/>
            <person name="Mottier S."/>
            <person name="Galibert F."/>
            <person name="Aves S.J."/>
            <person name="Xiang Z."/>
            <person name="Hunt C."/>
            <person name="Moore K."/>
            <person name="Hurst S.M."/>
            <person name="Lucas M."/>
            <person name="Rochet M."/>
            <person name="Gaillardin C."/>
            <person name="Tallada V.A."/>
            <person name="Garzon A."/>
            <person name="Thode G."/>
            <person name="Daga R.R."/>
            <person name="Cruzado L."/>
            <person name="Jimenez J."/>
            <person name="Sanchez M."/>
            <person name="del Rey F."/>
            <person name="Benito J."/>
            <person name="Dominguez A."/>
            <person name="Revuelta J.L."/>
            <person name="Moreno S."/>
            <person name="Armstrong J."/>
            <person name="Forsburg S.L."/>
            <person name="Cerutti L."/>
            <person name="Lowe T."/>
            <person name="McCombie W.R."/>
            <person name="Paulsen I."/>
            <person name="Potashkin J."/>
            <person name="Shpakovski G.V."/>
            <person name="Ussery D."/>
            <person name="Barrell B.G."/>
            <person name="Nurse P."/>
        </authorList>
    </citation>
    <scope>NUCLEOTIDE SEQUENCE [LARGE SCALE GENOMIC DNA]</scope>
    <source>
        <strain>972 / ATCC 24843</strain>
    </source>
</reference>
<reference key="3">
    <citation type="journal article" date="2003" name="J. Biol. Chem.">
        <title>Interactions between fission yeast Cdk9, its cyclin partner Pch1, and mRNA capping enzyme Pct1 suggest an elongation checkpoint for mRNA quality control.</title>
        <authorList>
            <person name="Pei Y."/>
            <person name="Schwer B."/>
            <person name="Shuman S."/>
        </authorList>
    </citation>
    <scope>FUNCTION</scope>
    <scope>INTERACTION WITH PCH1 AND PCT1</scope>
    <scope>MUTAGENESIS OF LYS-65; GLU-83; ASP-184 AND THR-212</scope>
</reference>
<reference key="4">
    <citation type="journal article" date="2006" name="Mol. Cell. Biol.">
        <title>Cyclin-dependent kinase 9 (Cdk9) of fission yeast is activated by the CDK-activating kinase Csk1, overlaps functionally with the TFIIH-associated kinase Mcs6, and associates with the mRNA cap methyltransferase Pcm1 in vivo.</title>
        <authorList>
            <person name="Pei Y."/>
            <person name="Du H."/>
            <person name="Singer J."/>
            <person name="Saint Amour C."/>
            <person name="Granitto S."/>
            <person name="Shuman S."/>
            <person name="Fisher R.P."/>
        </authorList>
    </citation>
    <scope>INTERACTION WITH PCM1</scope>
</reference>
<reference key="5">
    <citation type="journal article" date="2008" name="J. Proteome Res.">
        <title>Phosphoproteome analysis of fission yeast.</title>
        <authorList>
            <person name="Wilson-Grady J.T."/>
            <person name="Villen J."/>
            <person name="Gygi S.P."/>
        </authorList>
    </citation>
    <scope>PHOSPHORYLATION [LARGE SCALE ANALYSIS] AT TYR-211; THR-212; THR-565 AND SER-577</scope>
    <scope>IDENTIFICATION BY MASS SPECTROMETRY</scope>
</reference>
<dbReference type="EC" id="2.7.11.22"/>
<dbReference type="EC" id="2.7.11.23"/>
<dbReference type="EMBL" id="AB004534">
    <property type="protein sequence ID" value="BAA21391.2"/>
    <property type="status" value="ALT_INIT"/>
    <property type="molecule type" value="Genomic_DNA"/>
</dbReference>
<dbReference type="EMBL" id="CU329671">
    <property type="protein sequence ID" value="CAC37500.1"/>
    <property type="molecule type" value="Genomic_DNA"/>
</dbReference>
<dbReference type="RefSeq" id="NP_595616.1">
    <property type="nucleotide sequence ID" value="NM_001021511.2"/>
</dbReference>
<dbReference type="SMR" id="Q96WV9"/>
<dbReference type="BioGRID" id="276771">
    <property type="interactions" value="33"/>
</dbReference>
<dbReference type="FunCoup" id="Q96WV9">
    <property type="interactions" value="863"/>
</dbReference>
<dbReference type="IntAct" id="Q96WV9">
    <property type="interactions" value="2"/>
</dbReference>
<dbReference type="MINT" id="Q96WV9"/>
<dbReference type="STRING" id="284812.Q96WV9"/>
<dbReference type="iPTMnet" id="Q96WV9"/>
<dbReference type="PaxDb" id="4896-SPBC32H8.10.1"/>
<dbReference type="EnsemblFungi" id="SPBC32H8.10.1">
    <property type="protein sequence ID" value="SPBC32H8.10.1:pep"/>
    <property type="gene ID" value="SPBC32H8.10"/>
</dbReference>
<dbReference type="GeneID" id="2540239"/>
<dbReference type="KEGG" id="spo:2540239"/>
<dbReference type="PomBase" id="SPBC32H8.10">
    <property type="gene designation" value="cdk9"/>
</dbReference>
<dbReference type="VEuPathDB" id="FungiDB:SPBC32H8.10"/>
<dbReference type="eggNOG" id="KOG0600">
    <property type="taxonomic scope" value="Eukaryota"/>
</dbReference>
<dbReference type="HOGENOM" id="CLU_000288_181_21_1"/>
<dbReference type="InParanoid" id="Q96WV9"/>
<dbReference type="OMA" id="HYCHANE"/>
<dbReference type="PhylomeDB" id="Q96WV9"/>
<dbReference type="BRENDA" id="2.7.11.23">
    <property type="organism ID" value="5613"/>
</dbReference>
<dbReference type="Reactome" id="R-SPO-6796648">
    <property type="pathway name" value="TP53 Regulates Transcription of DNA Repair Genes"/>
</dbReference>
<dbReference type="Reactome" id="R-SPO-6798695">
    <property type="pathway name" value="Neutrophil degranulation"/>
</dbReference>
<dbReference type="PRO" id="PR:Q96WV9"/>
<dbReference type="Proteomes" id="UP000002485">
    <property type="component" value="Chromosome II"/>
</dbReference>
<dbReference type="GO" id="GO:0000785">
    <property type="term" value="C:chromatin"/>
    <property type="evidence" value="ECO:0000314"/>
    <property type="project" value="PomBase"/>
</dbReference>
<dbReference type="GO" id="GO:0000307">
    <property type="term" value="C:cyclin-dependent protein kinase holoenzyme complex"/>
    <property type="evidence" value="ECO:0000353"/>
    <property type="project" value="PomBase"/>
</dbReference>
<dbReference type="GO" id="GO:0005634">
    <property type="term" value="C:nucleus"/>
    <property type="evidence" value="ECO:0000314"/>
    <property type="project" value="PomBase"/>
</dbReference>
<dbReference type="GO" id="GO:0070691">
    <property type="term" value="C:P-TEFb complex"/>
    <property type="evidence" value="ECO:0000353"/>
    <property type="project" value="PomBase"/>
</dbReference>
<dbReference type="GO" id="GO:0070693">
    <property type="term" value="C:P-TEFb-cap methyltransferase complex"/>
    <property type="evidence" value="ECO:0000314"/>
    <property type="project" value="PomBase"/>
</dbReference>
<dbReference type="GO" id="GO:0005524">
    <property type="term" value="F:ATP binding"/>
    <property type="evidence" value="ECO:0000314"/>
    <property type="project" value="UniProtKB"/>
</dbReference>
<dbReference type="GO" id="GO:0004693">
    <property type="term" value="F:cyclin-dependent protein serine/threonine kinase activity"/>
    <property type="evidence" value="ECO:0000314"/>
    <property type="project" value="UniProtKB"/>
</dbReference>
<dbReference type="GO" id="GO:0106310">
    <property type="term" value="F:protein serine kinase activity"/>
    <property type="evidence" value="ECO:0007669"/>
    <property type="project" value="RHEA"/>
</dbReference>
<dbReference type="GO" id="GO:0004674">
    <property type="term" value="F:protein serine/threonine kinase activity"/>
    <property type="evidence" value="ECO:0000314"/>
    <property type="project" value="UniProtKB"/>
</dbReference>
<dbReference type="GO" id="GO:0140834">
    <property type="term" value="F:RNA polymerase II CTD heptapeptide repeat S2 kinase activity"/>
    <property type="evidence" value="ECO:0000269"/>
    <property type="project" value="PomBase"/>
</dbReference>
<dbReference type="GO" id="GO:0030643">
    <property type="term" value="P:intracellular phosphate ion homeostasis"/>
    <property type="evidence" value="ECO:0000315"/>
    <property type="project" value="PomBase"/>
</dbReference>
<dbReference type="GO" id="GO:0032968">
    <property type="term" value="P:positive regulation of transcription elongation by RNA polymerase II"/>
    <property type="evidence" value="ECO:0000315"/>
    <property type="project" value="PomBase"/>
</dbReference>
<dbReference type="CDD" id="cd07866">
    <property type="entry name" value="STKc_BUR1"/>
    <property type="match status" value="1"/>
</dbReference>
<dbReference type="FunFam" id="3.30.200.20:FF:000514">
    <property type="entry name" value="Serine/threonine-protein kinase BUR1"/>
    <property type="match status" value="1"/>
</dbReference>
<dbReference type="FunFam" id="1.10.510.10:FF:000562">
    <property type="entry name" value="Serine/threonine-protein kinase bur1"/>
    <property type="match status" value="1"/>
</dbReference>
<dbReference type="Gene3D" id="3.30.200.20">
    <property type="entry name" value="Phosphorylase Kinase, domain 1"/>
    <property type="match status" value="1"/>
</dbReference>
<dbReference type="Gene3D" id="1.10.510.10">
    <property type="entry name" value="Transferase(Phosphotransferase) domain 1"/>
    <property type="match status" value="1"/>
</dbReference>
<dbReference type="InterPro" id="IPR050108">
    <property type="entry name" value="CDK"/>
</dbReference>
<dbReference type="InterPro" id="IPR011009">
    <property type="entry name" value="Kinase-like_dom_sf"/>
</dbReference>
<dbReference type="InterPro" id="IPR000719">
    <property type="entry name" value="Prot_kinase_dom"/>
</dbReference>
<dbReference type="InterPro" id="IPR017441">
    <property type="entry name" value="Protein_kinase_ATP_BS"/>
</dbReference>
<dbReference type="InterPro" id="IPR008271">
    <property type="entry name" value="Ser/Thr_kinase_AS"/>
</dbReference>
<dbReference type="PANTHER" id="PTHR24056">
    <property type="entry name" value="CELL DIVISION PROTEIN KINASE"/>
    <property type="match status" value="1"/>
</dbReference>
<dbReference type="PANTHER" id="PTHR24056:SF233">
    <property type="entry name" value="CYCLIN-DEPENDENT KINASE 9"/>
    <property type="match status" value="1"/>
</dbReference>
<dbReference type="Pfam" id="PF00069">
    <property type="entry name" value="Pkinase"/>
    <property type="match status" value="1"/>
</dbReference>
<dbReference type="SMART" id="SM00220">
    <property type="entry name" value="S_TKc"/>
    <property type="match status" value="1"/>
</dbReference>
<dbReference type="SUPFAM" id="SSF56112">
    <property type="entry name" value="Protein kinase-like (PK-like)"/>
    <property type="match status" value="1"/>
</dbReference>
<dbReference type="PROSITE" id="PS00107">
    <property type="entry name" value="PROTEIN_KINASE_ATP"/>
    <property type="match status" value="1"/>
</dbReference>
<dbReference type="PROSITE" id="PS50011">
    <property type="entry name" value="PROTEIN_KINASE_DOM"/>
    <property type="match status" value="1"/>
</dbReference>
<dbReference type="PROSITE" id="PS00108">
    <property type="entry name" value="PROTEIN_KINASE_ST"/>
    <property type="match status" value="1"/>
</dbReference>
<proteinExistence type="evidence at protein level"/>
<comment type="function">
    <text evidence="4">Component of the positive transcription elongation factor b (P-TEFb) which consists of cdk9 and pch1, and which phosphorylates the C-terminal domain (CTD) of RNA polymerase II and spt5.</text>
</comment>
<comment type="catalytic activity">
    <reaction>
        <text>L-seryl-[protein] + ATP = O-phospho-L-seryl-[protein] + ADP + H(+)</text>
        <dbReference type="Rhea" id="RHEA:17989"/>
        <dbReference type="Rhea" id="RHEA-COMP:9863"/>
        <dbReference type="Rhea" id="RHEA-COMP:11604"/>
        <dbReference type="ChEBI" id="CHEBI:15378"/>
        <dbReference type="ChEBI" id="CHEBI:29999"/>
        <dbReference type="ChEBI" id="CHEBI:30616"/>
        <dbReference type="ChEBI" id="CHEBI:83421"/>
        <dbReference type="ChEBI" id="CHEBI:456216"/>
        <dbReference type="EC" id="2.7.11.22"/>
    </reaction>
</comment>
<comment type="catalytic activity">
    <reaction>
        <text>L-threonyl-[protein] + ATP = O-phospho-L-threonyl-[protein] + ADP + H(+)</text>
        <dbReference type="Rhea" id="RHEA:46608"/>
        <dbReference type="Rhea" id="RHEA-COMP:11060"/>
        <dbReference type="Rhea" id="RHEA-COMP:11605"/>
        <dbReference type="ChEBI" id="CHEBI:15378"/>
        <dbReference type="ChEBI" id="CHEBI:30013"/>
        <dbReference type="ChEBI" id="CHEBI:30616"/>
        <dbReference type="ChEBI" id="CHEBI:61977"/>
        <dbReference type="ChEBI" id="CHEBI:456216"/>
        <dbReference type="EC" id="2.7.11.22"/>
    </reaction>
</comment>
<comment type="catalytic activity">
    <reaction>
        <text>[DNA-directed RNA polymerase] + ATP = phospho-[DNA-directed RNA polymerase] + ADP + H(+)</text>
        <dbReference type="Rhea" id="RHEA:10216"/>
        <dbReference type="Rhea" id="RHEA-COMP:11321"/>
        <dbReference type="Rhea" id="RHEA-COMP:11322"/>
        <dbReference type="ChEBI" id="CHEBI:15378"/>
        <dbReference type="ChEBI" id="CHEBI:30616"/>
        <dbReference type="ChEBI" id="CHEBI:43176"/>
        <dbReference type="ChEBI" id="CHEBI:68546"/>
        <dbReference type="ChEBI" id="CHEBI:456216"/>
        <dbReference type="EC" id="2.7.11.23"/>
    </reaction>
</comment>
<comment type="activity regulation">
    <text>May be activated by autophosphorylation or phosphorylation by a separate activating kinase.</text>
</comment>
<comment type="subunit">
    <text evidence="4 5">Interacts with pch1 cyclin via its N-terminal domain. Via its C-terminal domain, interacts with RNA triphosphatase pct1 which is involved in mRNA capping. Also interacts with pcm1.</text>
</comment>
<comment type="interaction">
    <interactant intactId="EBI-443557">
        <id>Q96WV9</id>
    </interactant>
    <interactant intactId="EBI-443575">
        <id>O74627</id>
        <label>pch1</label>
    </interactant>
    <organismsDiffer>false</organismsDiffer>
    <experiments>2</experiments>
</comment>
<comment type="interaction">
    <interactant intactId="EBI-443557">
        <id>Q96WV9</id>
    </interactant>
    <interactant intactId="EBI-443547">
        <id>Q9P6Q6</id>
        <label>pct1</label>
    </interactant>
    <organismsDiffer>false</organismsDiffer>
    <experiments>2</experiments>
</comment>
<comment type="subcellular location">
    <subcellularLocation>
        <location>Nucleus</location>
    </subcellularLocation>
</comment>
<comment type="similarity">
    <text evidence="7">Belongs to the protein kinase superfamily. CMGC Ser/Thr protein kinase family. CDC2/CDKX subfamily.</text>
</comment>
<comment type="sequence caution" evidence="7">
    <conflict type="erroneous initiation">
        <sequence resource="EMBL-CDS" id="BAA21391"/>
    </conflict>
</comment>
<sequence length="591" mass="68029">MKRSSSVSVEDEKSARRKLDVVPKLHFVGCSHLTDYHLMEKLGEGTFGEVYKSQRRKDGKVYALKRILMHTEKEGFPITAIREIKILKSIKHENIIPLSDMTVVRADKKHRRRGSIYMVTPYMDHDLSGLLENPSVKFTEPQIKCYMKQLFAGTKYLHDQLILHRDLKAANLLIDNHGILKIADFGLARVITEESYANKNPGLPPPNRREYTGCVVTRWYRSPELLLGERRYTTAIDMWSVGCIMAEMYKGRPILQGSSDLDQLDKIFRLCGSPTQATMPNWEKLPGCEGVRSFPSHPRTLETAFFTFGKEMTSLCGAILTLNPDERLSASMALEHEYFTTPPYPANPSELQSYSASHEYDKRRKREQRDANSHAFEQTANGKRQFRFMTRGPSDPWYGIRRPNYNSQPQYQRGSYNREGGNMDRSRNVNYQPKRQQNFKPLTSDLPQKNSEFSETNAMNQTSNHSHADGQRYYRPEQDRSQRLRNPSDYGRQGRQSSQSQQPAWNVSSRYQNNSKVQTTSRASENADTNKTQHNIKYIDSYVPEYSIARQSANQKTNEQHPSSTSLHQQSTSDLKSPSFHENSNVDDTPK</sequence>